<comment type="function">
    <text evidence="1">NDH shuttles electrons from NAD(P)H:plastoquinone, via FMN and iron-sulfur (Fe-S) centers, to quinones in the photosynthetic chain and possibly in a chloroplast respiratory chain. The immediate electron acceptor for the enzyme in this species is believed to be plastoquinone. Couples the redox reaction to proton translocation, and thus conserves the redox energy in a proton gradient.</text>
</comment>
<comment type="catalytic activity">
    <reaction evidence="1">
        <text>a plastoquinone + NADH + (n+1) H(+)(in) = a plastoquinol + NAD(+) + n H(+)(out)</text>
        <dbReference type="Rhea" id="RHEA:42608"/>
        <dbReference type="Rhea" id="RHEA-COMP:9561"/>
        <dbReference type="Rhea" id="RHEA-COMP:9562"/>
        <dbReference type="ChEBI" id="CHEBI:15378"/>
        <dbReference type="ChEBI" id="CHEBI:17757"/>
        <dbReference type="ChEBI" id="CHEBI:57540"/>
        <dbReference type="ChEBI" id="CHEBI:57945"/>
        <dbReference type="ChEBI" id="CHEBI:62192"/>
    </reaction>
</comment>
<comment type="catalytic activity">
    <reaction evidence="1">
        <text>a plastoquinone + NADPH + (n+1) H(+)(in) = a plastoquinol + NADP(+) + n H(+)(out)</text>
        <dbReference type="Rhea" id="RHEA:42612"/>
        <dbReference type="Rhea" id="RHEA-COMP:9561"/>
        <dbReference type="Rhea" id="RHEA-COMP:9562"/>
        <dbReference type="ChEBI" id="CHEBI:15378"/>
        <dbReference type="ChEBI" id="CHEBI:17757"/>
        <dbReference type="ChEBI" id="CHEBI:57783"/>
        <dbReference type="ChEBI" id="CHEBI:58349"/>
        <dbReference type="ChEBI" id="CHEBI:62192"/>
    </reaction>
</comment>
<comment type="subunit">
    <text evidence="1">NDH is composed of at least 16 different subunits, 5 of which are encoded in the nucleus.</text>
</comment>
<comment type="subcellular location">
    <subcellularLocation>
        <location evidence="1">Plastid</location>
        <location evidence="1">Chloroplast thylakoid membrane</location>
        <topology evidence="1">Multi-pass membrane protein</topology>
    </subcellularLocation>
</comment>
<comment type="RNA editing">
    <location>
        <position position="1" evidence="2"/>
    </location>
    <location>
        <position position="31" evidence="2"/>
    </location>
    <location>
        <position position="94" evidence="2"/>
    </location>
    <location>
        <position position="166" evidence="2"/>
    </location>
    <location>
        <position position="170" evidence="2"/>
    </location>
    <location>
        <position position="178" evidence="2"/>
    </location>
    <location>
        <position position="185" evidence="2"/>
    </location>
    <location>
        <position position="189" evidence="2"/>
    </location>
    <location>
        <position position="260" evidence="2"/>
    </location>
    <location>
        <position position="262" evidence="2"/>
    </location>
    <location>
        <position position="309" evidence="2"/>
    </location>
    <location>
        <position position="310" evidence="2"/>
    </location>
    <location>
        <position position="351" evidence="2"/>
    </location>
    <location>
        <position position="381" evidence="2"/>
    </location>
    <location>
        <position position="384" evidence="2"/>
    </location>
    <location>
        <position position="385" evidence="2"/>
    </location>
    <location>
        <position position="386" evidence="2"/>
    </location>
    <location>
        <position position="394" evidence="2"/>
    </location>
    <location>
        <position position="415" evidence="2"/>
    </location>
    <location>
        <position position="417" evidence="2"/>
    </location>
    <location>
        <position position="436" evidence="2"/>
    </location>
    <location>
        <position position="475" evidence="2"/>
    </location>
    <text>The initiatior methionine is created by RNA editing.</text>
</comment>
<comment type="miscellaneous">
    <text>A second copy of the second exon exists; it is not known if it is transcribed or not.</text>
</comment>
<comment type="similarity">
    <text evidence="1">Belongs to the complex I subunit 2 family.</text>
</comment>
<proteinExistence type="evidence at transcript level"/>
<reference key="1">
    <citation type="journal article" date="2003" name="DNA Res.">
        <title>Complete nucleotide sequence of the chloroplast genome from a leptosporangiate fern, Adiantum capillus-veneris L.</title>
        <authorList>
            <person name="Wolf P.G."/>
            <person name="Rowe C.A."/>
            <person name="Sinclair R.B."/>
            <person name="Hasebe M."/>
        </authorList>
    </citation>
    <scope>NUCLEOTIDE SEQUENCE [LARGE SCALE GENOMIC DNA]</scope>
</reference>
<reference key="2">
    <citation type="journal article" date="2004" name="Gene">
        <title>High levels of RNA editing in a vascular plant chloroplast genome: analysis of transcripts from the fern Adiantum capillus-veneris.</title>
        <authorList>
            <person name="Wolf P.G."/>
            <person name="Rowe C.A."/>
            <person name="Hasebe M."/>
        </authorList>
    </citation>
    <scope>NUCLEOTIDE SEQUENCE [GENOMIC DNA]</scope>
    <scope>RNA EDITING</scope>
    <source>
        <tissue>Frond</tissue>
    </source>
</reference>
<sequence length="498" mass="54810">MNDINLFLAKLTYTSAKLTILPEIILILGLVAVVVIDLLSKGKNTFLLYKISMVTLLASAVILLWQWGFFTAYERSHARDFGNIFRFFLLICSLLSISSSVDYILCSKMSLAEFLLFKLAAGLGGMVLSCANDLVTIYVSLEFLALSSCFLSGYTKRDMRSNEATMKFLLMSGASSSLLLYGFSLLYGLSGGQLQLDKIVDGIIFNRYGSIIYLSAAFTTAGTAFKLSLFPFHQWTPDVYEGSPTPVVAFFSVTSKVAALALFTRLFGLIFPYFSNEWHVAVGLLATFSMILGNLIAVTQRSVKRMLAFSSISQIGYIMIGVLSADSGNGYASMITYTFIYILMNLGTFACITLFGLRTGTDNIRDYAGLYMKDPVLTFSLVLCLLSLGGMPPLSGFFGKLYLFWHGWKAGLYSLVLVALVTSVISIYYYLKIIKLMFTGKSGRSDTPLNSRQNSLVSLSISISKNSLEIAMIICALASTLSGIFIDPIIEITRNTFF</sequence>
<accession>Q85FP1</accession>
<keyword id="KW-0150">Chloroplast</keyword>
<keyword id="KW-0472">Membrane</keyword>
<keyword id="KW-0520">NAD</keyword>
<keyword id="KW-0521">NADP</keyword>
<keyword id="KW-0934">Plastid</keyword>
<keyword id="KW-0618">Plastoquinone</keyword>
<keyword id="KW-0874">Quinone</keyword>
<keyword id="KW-0691">RNA editing</keyword>
<keyword id="KW-0793">Thylakoid</keyword>
<keyword id="KW-1278">Translocase</keyword>
<keyword id="KW-0812">Transmembrane</keyword>
<keyword id="KW-1133">Transmembrane helix</keyword>
<keyword id="KW-0813">Transport</keyword>
<name>NU2C_ADICA</name>
<geneLocation type="chloroplast"/>
<protein>
    <recommendedName>
        <fullName evidence="1">NAD(P)H-quinone oxidoreductase subunit 2, chloroplastic</fullName>
        <ecNumber evidence="1">7.1.1.-</ecNumber>
    </recommendedName>
    <alternativeName>
        <fullName evidence="1">NAD(P)H dehydrogenase, subunit 2</fullName>
    </alternativeName>
    <alternativeName>
        <fullName evidence="1">NADH-plastoquinone oxidoreductase subunit 2</fullName>
    </alternativeName>
</protein>
<gene>
    <name evidence="1" type="primary">ndhB</name>
</gene>
<evidence type="ECO:0000255" key="1">
    <source>
        <dbReference type="HAMAP-Rule" id="MF_00445"/>
    </source>
</evidence>
<evidence type="ECO:0000269" key="2">
    <source>
    </source>
</evidence>
<organism>
    <name type="scientific">Adiantum capillus-veneris</name>
    <name type="common">Maidenhair fern</name>
    <dbReference type="NCBI Taxonomy" id="13818"/>
    <lineage>
        <taxon>Eukaryota</taxon>
        <taxon>Viridiplantae</taxon>
        <taxon>Streptophyta</taxon>
        <taxon>Embryophyta</taxon>
        <taxon>Tracheophyta</taxon>
        <taxon>Polypodiopsida</taxon>
        <taxon>Polypodiidae</taxon>
        <taxon>Polypodiales</taxon>
        <taxon>Pteridineae</taxon>
        <taxon>Pteridaceae</taxon>
        <taxon>Vittarioideae</taxon>
        <taxon>Adiantum</taxon>
    </lineage>
</organism>
<feature type="chain" id="PRO_0000117650" description="NAD(P)H-quinone oxidoreductase subunit 2, chloroplastic">
    <location>
        <begin position="1"/>
        <end position="498"/>
    </location>
</feature>
<feature type="transmembrane region" description="Helical" evidence="1">
    <location>
        <begin position="18"/>
        <end position="38"/>
    </location>
</feature>
<feature type="transmembrane region" description="Helical" evidence="1">
    <location>
        <begin position="51"/>
        <end position="71"/>
    </location>
</feature>
<feature type="transmembrane region" description="Helical" evidence="1">
    <location>
        <begin position="87"/>
        <end position="107"/>
    </location>
</feature>
<feature type="transmembrane region" description="Helical" evidence="1">
    <location>
        <begin position="111"/>
        <end position="131"/>
    </location>
</feature>
<feature type="transmembrane region" description="Helical" evidence="1">
    <location>
        <begin position="134"/>
        <end position="154"/>
    </location>
</feature>
<feature type="transmembrane region" description="Helical" evidence="1">
    <location>
        <begin position="168"/>
        <end position="188"/>
    </location>
</feature>
<feature type="transmembrane region" description="Helical" evidence="1">
    <location>
        <begin position="211"/>
        <end position="231"/>
    </location>
</feature>
<feature type="transmembrane region" description="Helical" evidence="1">
    <location>
        <begin position="244"/>
        <end position="264"/>
    </location>
</feature>
<feature type="transmembrane region" description="Helical" evidence="1">
    <location>
        <begin position="278"/>
        <end position="298"/>
    </location>
</feature>
<feature type="transmembrane region" description="Helical" evidence="1">
    <location>
        <begin position="306"/>
        <end position="326"/>
    </location>
</feature>
<feature type="transmembrane region" description="Helical" evidence="1">
    <location>
        <begin position="337"/>
        <end position="357"/>
    </location>
</feature>
<feature type="transmembrane region" description="Helical" evidence="1">
    <location>
        <begin position="379"/>
        <end position="399"/>
    </location>
</feature>
<feature type="transmembrane region" description="Helical" evidence="1">
    <location>
        <begin position="411"/>
        <end position="431"/>
    </location>
</feature>
<feature type="transmembrane region" description="Helical" evidence="1">
    <location>
        <begin position="470"/>
        <end position="490"/>
    </location>
</feature>
<dbReference type="EC" id="7.1.1.-" evidence="1"/>
<dbReference type="EMBL" id="AY178864">
    <property type="protein sequence ID" value="AAP29370.2"/>
    <property type="molecule type" value="Genomic_DNA"/>
</dbReference>
<dbReference type="RefSeq" id="NP_848038.2">
    <property type="nucleotide sequence ID" value="NC_004766.1"/>
</dbReference>
<dbReference type="SMR" id="Q85FP1"/>
<dbReference type="GeneID" id="807345"/>
<dbReference type="GO" id="GO:0009535">
    <property type="term" value="C:chloroplast thylakoid membrane"/>
    <property type="evidence" value="ECO:0007669"/>
    <property type="project" value="UniProtKB-SubCell"/>
</dbReference>
<dbReference type="GO" id="GO:0008137">
    <property type="term" value="F:NADH dehydrogenase (ubiquinone) activity"/>
    <property type="evidence" value="ECO:0007669"/>
    <property type="project" value="InterPro"/>
</dbReference>
<dbReference type="GO" id="GO:0048038">
    <property type="term" value="F:quinone binding"/>
    <property type="evidence" value="ECO:0007669"/>
    <property type="project" value="UniProtKB-KW"/>
</dbReference>
<dbReference type="GO" id="GO:0042773">
    <property type="term" value="P:ATP synthesis coupled electron transport"/>
    <property type="evidence" value="ECO:0007669"/>
    <property type="project" value="InterPro"/>
</dbReference>
<dbReference type="GO" id="GO:0019684">
    <property type="term" value="P:photosynthesis, light reaction"/>
    <property type="evidence" value="ECO:0007669"/>
    <property type="project" value="UniProtKB-UniRule"/>
</dbReference>
<dbReference type="HAMAP" id="MF_00445">
    <property type="entry name" value="NDH1_NuoN_1"/>
    <property type="match status" value="1"/>
</dbReference>
<dbReference type="InterPro" id="IPR010096">
    <property type="entry name" value="NADH-Q_OxRdtase_suN/2"/>
</dbReference>
<dbReference type="InterPro" id="IPR001750">
    <property type="entry name" value="ND/Mrp_TM"/>
</dbReference>
<dbReference type="InterPro" id="IPR045693">
    <property type="entry name" value="Ndh2_N"/>
</dbReference>
<dbReference type="NCBIfam" id="TIGR01770">
    <property type="entry name" value="NDH_I_N"/>
    <property type="match status" value="1"/>
</dbReference>
<dbReference type="PANTHER" id="PTHR22773">
    <property type="entry name" value="NADH DEHYDROGENASE"/>
    <property type="match status" value="1"/>
</dbReference>
<dbReference type="Pfam" id="PF19530">
    <property type="entry name" value="Ndh2_N"/>
    <property type="match status" value="1"/>
</dbReference>
<dbReference type="Pfam" id="PF00361">
    <property type="entry name" value="Proton_antipo_M"/>
    <property type="match status" value="1"/>
</dbReference>
<dbReference type="PRINTS" id="PR01434">
    <property type="entry name" value="NADHDHGNASE5"/>
</dbReference>